<protein>
    <recommendedName>
        <fullName evidence="1">UDP-N-acetylenolpyruvoylglucosamine reductase</fullName>
        <ecNumber evidence="1">1.3.1.98</ecNumber>
    </recommendedName>
    <alternativeName>
        <fullName evidence="1">UDP-N-acetylmuramate dehydrogenase</fullName>
    </alternativeName>
</protein>
<organism>
    <name type="scientific">Vibrio cholerae serotype O1 (strain ATCC 39541 / Classical Ogawa 395 / O395)</name>
    <dbReference type="NCBI Taxonomy" id="345073"/>
    <lineage>
        <taxon>Bacteria</taxon>
        <taxon>Pseudomonadati</taxon>
        <taxon>Pseudomonadota</taxon>
        <taxon>Gammaproteobacteria</taxon>
        <taxon>Vibrionales</taxon>
        <taxon>Vibrionaceae</taxon>
        <taxon>Vibrio</taxon>
    </lineage>
</organism>
<keyword id="KW-0131">Cell cycle</keyword>
<keyword id="KW-0132">Cell division</keyword>
<keyword id="KW-0133">Cell shape</keyword>
<keyword id="KW-0961">Cell wall biogenesis/degradation</keyword>
<keyword id="KW-0963">Cytoplasm</keyword>
<keyword id="KW-0274">FAD</keyword>
<keyword id="KW-0285">Flavoprotein</keyword>
<keyword id="KW-0521">NADP</keyword>
<keyword id="KW-0560">Oxidoreductase</keyword>
<keyword id="KW-0573">Peptidoglycan synthesis</keyword>
<dbReference type="EC" id="1.3.1.98" evidence="1"/>
<dbReference type="EMBL" id="CP000627">
    <property type="protein sequence ID" value="ABQ19936.1"/>
    <property type="status" value="ALT_INIT"/>
    <property type="molecule type" value="Genomic_DNA"/>
</dbReference>
<dbReference type="EMBL" id="CP001235">
    <property type="protein sequence ID" value="ACP08384.1"/>
    <property type="status" value="ALT_INIT"/>
    <property type="molecule type" value="Genomic_DNA"/>
</dbReference>
<dbReference type="SMR" id="A5F3P9"/>
<dbReference type="KEGG" id="vco:VC0395_A2716"/>
<dbReference type="KEGG" id="vcr:VC395_0361"/>
<dbReference type="PATRIC" id="fig|345073.21.peg.349"/>
<dbReference type="eggNOG" id="COG0812">
    <property type="taxonomic scope" value="Bacteria"/>
</dbReference>
<dbReference type="HOGENOM" id="CLU_035304_0_0_6"/>
<dbReference type="UniPathway" id="UPA00219"/>
<dbReference type="Proteomes" id="UP000000249">
    <property type="component" value="Chromosome 2"/>
</dbReference>
<dbReference type="GO" id="GO:0005829">
    <property type="term" value="C:cytosol"/>
    <property type="evidence" value="ECO:0007669"/>
    <property type="project" value="TreeGrafter"/>
</dbReference>
<dbReference type="GO" id="GO:0071949">
    <property type="term" value="F:FAD binding"/>
    <property type="evidence" value="ECO:0007669"/>
    <property type="project" value="InterPro"/>
</dbReference>
<dbReference type="GO" id="GO:0008762">
    <property type="term" value="F:UDP-N-acetylmuramate dehydrogenase activity"/>
    <property type="evidence" value="ECO:0007669"/>
    <property type="project" value="UniProtKB-UniRule"/>
</dbReference>
<dbReference type="GO" id="GO:0051301">
    <property type="term" value="P:cell division"/>
    <property type="evidence" value="ECO:0007669"/>
    <property type="project" value="UniProtKB-KW"/>
</dbReference>
<dbReference type="GO" id="GO:0071555">
    <property type="term" value="P:cell wall organization"/>
    <property type="evidence" value="ECO:0007669"/>
    <property type="project" value="UniProtKB-KW"/>
</dbReference>
<dbReference type="GO" id="GO:0009252">
    <property type="term" value="P:peptidoglycan biosynthetic process"/>
    <property type="evidence" value="ECO:0007669"/>
    <property type="project" value="UniProtKB-UniRule"/>
</dbReference>
<dbReference type="GO" id="GO:0008360">
    <property type="term" value="P:regulation of cell shape"/>
    <property type="evidence" value="ECO:0007669"/>
    <property type="project" value="UniProtKB-KW"/>
</dbReference>
<dbReference type="Gene3D" id="3.30.465.10">
    <property type="match status" value="1"/>
</dbReference>
<dbReference type="Gene3D" id="3.90.78.10">
    <property type="entry name" value="UDP-N-acetylenolpyruvoylglucosamine reductase, C-terminal domain"/>
    <property type="match status" value="1"/>
</dbReference>
<dbReference type="Gene3D" id="3.30.43.10">
    <property type="entry name" value="Uridine Diphospho-n-acetylenolpyruvylglucosamine Reductase, domain 2"/>
    <property type="match status" value="1"/>
</dbReference>
<dbReference type="HAMAP" id="MF_00037">
    <property type="entry name" value="MurB"/>
    <property type="match status" value="1"/>
</dbReference>
<dbReference type="InterPro" id="IPR016166">
    <property type="entry name" value="FAD-bd_PCMH"/>
</dbReference>
<dbReference type="InterPro" id="IPR036318">
    <property type="entry name" value="FAD-bd_PCMH-like_sf"/>
</dbReference>
<dbReference type="InterPro" id="IPR016167">
    <property type="entry name" value="FAD-bd_PCMH_sub1"/>
</dbReference>
<dbReference type="InterPro" id="IPR016169">
    <property type="entry name" value="FAD-bd_PCMH_sub2"/>
</dbReference>
<dbReference type="InterPro" id="IPR003170">
    <property type="entry name" value="MurB"/>
</dbReference>
<dbReference type="InterPro" id="IPR011601">
    <property type="entry name" value="MurB_C"/>
</dbReference>
<dbReference type="InterPro" id="IPR036635">
    <property type="entry name" value="MurB_C_sf"/>
</dbReference>
<dbReference type="InterPro" id="IPR006094">
    <property type="entry name" value="Oxid_FAD_bind_N"/>
</dbReference>
<dbReference type="NCBIfam" id="TIGR00179">
    <property type="entry name" value="murB"/>
    <property type="match status" value="1"/>
</dbReference>
<dbReference type="NCBIfam" id="NF000755">
    <property type="entry name" value="PRK00046.1"/>
    <property type="match status" value="1"/>
</dbReference>
<dbReference type="PANTHER" id="PTHR21071">
    <property type="entry name" value="UDP-N-ACETYLENOLPYRUVOYLGLUCOSAMINE REDUCTASE"/>
    <property type="match status" value="1"/>
</dbReference>
<dbReference type="PANTHER" id="PTHR21071:SF4">
    <property type="entry name" value="UDP-N-ACETYLENOLPYRUVOYLGLUCOSAMINE REDUCTASE"/>
    <property type="match status" value="1"/>
</dbReference>
<dbReference type="Pfam" id="PF01565">
    <property type="entry name" value="FAD_binding_4"/>
    <property type="match status" value="1"/>
</dbReference>
<dbReference type="Pfam" id="PF02873">
    <property type="entry name" value="MurB_C"/>
    <property type="match status" value="1"/>
</dbReference>
<dbReference type="SUPFAM" id="SSF56176">
    <property type="entry name" value="FAD-binding/transporter-associated domain-like"/>
    <property type="match status" value="1"/>
</dbReference>
<dbReference type="SUPFAM" id="SSF56194">
    <property type="entry name" value="Uridine diphospho-N-Acetylenolpyruvylglucosamine reductase, MurB, C-terminal domain"/>
    <property type="match status" value="1"/>
</dbReference>
<dbReference type="PROSITE" id="PS51387">
    <property type="entry name" value="FAD_PCMH"/>
    <property type="match status" value="1"/>
</dbReference>
<reference key="1">
    <citation type="submission" date="2007-03" db="EMBL/GenBank/DDBJ databases">
        <authorList>
            <person name="Heidelberg J."/>
        </authorList>
    </citation>
    <scope>NUCLEOTIDE SEQUENCE [LARGE SCALE GENOMIC DNA]</scope>
    <source>
        <strain>ATCC 39541 / Classical Ogawa 395 / O395</strain>
    </source>
</reference>
<reference key="2">
    <citation type="journal article" date="2008" name="PLoS ONE">
        <title>A recalibrated molecular clock and independent origins for the cholera pandemic clones.</title>
        <authorList>
            <person name="Feng L."/>
            <person name="Reeves P.R."/>
            <person name="Lan R."/>
            <person name="Ren Y."/>
            <person name="Gao C."/>
            <person name="Zhou Z."/>
            <person name="Ren Y."/>
            <person name="Cheng J."/>
            <person name="Wang W."/>
            <person name="Wang J."/>
            <person name="Qian W."/>
            <person name="Li D."/>
            <person name="Wang L."/>
        </authorList>
    </citation>
    <scope>NUCLEOTIDE SEQUENCE [LARGE SCALE GENOMIC DNA]</scope>
    <source>
        <strain>ATCC 39541 / Classical Ogawa 395 / O395</strain>
    </source>
</reference>
<feature type="chain" id="PRO_0000332521" description="UDP-N-acetylenolpyruvoylglucosamine reductase">
    <location>
        <begin position="1"/>
        <end position="347"/>
    </location>
</feature>
<feature type="domain" description="FAD-binding PCMH-type" evidence="1">
    <location>
        <begin position="17"/>
        <end position="187"/>
    </location>
</feature>
<feature type="active site" evidence="1">
    <location>
        <position position="163"/>
    </location>
</feature>
<feature type="active site" description="Proton donor" evidence="1">
    <location>
        <position position="232"/>
    </location>
</feature>
<feature type="active site" evidence="1">
    <location>
        <position position="327"/>
    </location>
</feature>
<evidence type="ECO:0000255" key="1">
    <source>
        <dbReference type="HAMAP-Rule" id="MF_00037"/>
    </source>
</evidence>
<evidence type="ECO:0000305" key="2"/>
<proteinExistence type="inferred from homology"/>
<gene>
    <name evidence="1" type="primary">murB</name>
    <name type="ordered locus">VC0395_A2716</name>
    <name type="ordered locus">VC395_0361</name>
</gene>
<name>MURB_VIBC3</name>
<comment type="function">
    <text evidence="1">Cell wall formation.</text>
</comment>
<comment type="catalytic activity">
    <reaction evidence="1">
        <text>UDP-N-acetyl-alpha-D-muramate + NADP(+) = UDP-N-acetyl-3-O-(1-carboxyvinyl)-alpha-D-glucosamine + NADPH + H(+)</text>
        <dbReference type="Rhea" id="RHEA:12248"/>
        <dbReference type="ChEBI" id="CHEBI:15378"/>
        <dbReference type="ChEBI" id="CHEBI:57783"/>
        <dbReference type="ChEBI" id="CHEBI:58349"/>
        <dbReference type="ChEBI" id="CHEBI:68483"/>
        <dbReference type="ChEBI" id="CHEBI:70757"/>
        <dbReference type="EC" id="1.3.1.98"/>
    </reaction>
</comment>
<comment type="cofactor">
    <cofactor evidence="1">
        <name>FAD</name>
        <dbReference type="ChEBI" id="CHEBI:57692"/>
    </cofactor>
</comment>
<comment type="pathway">
    <text evidence="1">Cell wall biogenesis; peptidoglycan biosynthesis.</text>
</comment>
<comment type="subcellular location">
    <subcellularLocation>
        <location evidence="1">Cytoplasm</location>
    </subcellularLocation>
</comment>
<comment type="similarity">
    <text evidence="1">Belongs to the MurB family.</text>
</comment>
<comment type="sequence caution" evidence="2">
    <conflict type="erroneous initiation">
        <sequence resource="EMBL-CDS" id="ABQ19936"/>
    </conflict>
</comment>
<comment type="sequence caution" evidence="2">
    <conflict type="erroneous initiation">
        <sequence resource="EMBL-CDS" id="ACP08384"/>
    </conflict>
</comment>
<accession>A5F3P9</accession>
<accession>C3M3X6</accession>
<sequence length="347" mass="38257">MQIQLGANLKPYHTFGIEQLAAQLVVAESIDDLKALYCSAEWASLPKLIIGKGSNMLFTCHYTGMVVVNRLNGIEHQQDDDYHRLHVAGGEDWPSLVSWCVEQGIGGLENLALIPGCAGSAPIQNIGAYGVEFKDVCDYVEYLCLETGTVKRLTMEECQFGYRDSIFKHQLYQKAVVTAVGLKFAKAWQPIIQYGPLKDLSSDCAIHDVYQRVCATRMEKLPDPAVMGNAGSFFKNPVISQQAFARLQIEHPDVVAYPAEQGVKVAAGWLIDQAGLKGHQIGGAKVHPKQALVIVNTGDASAQDVLMLAADIQQRVFNCYGIELEHEVRFIGESEETNLKQWMSEQA</sequence>